<keyword id="KW-0028">Amino-acid biosynthesis</keyword>
<keyword id="KW-0963">Cytoplasm</keyword>
<keyword id="KW-0368">Histidine biosynthesis</keyword>
<keyword id="KW-0378">Hydrolase</keyword>
<keyword id="KW-0460">Magnesium</keyword>
<keyword id="KW-0479">Metal-binding</keyword>
<keyword id="KW-1185">Reference proteome</keyword>
<keyword id="KW-0862">Zinc</keyword>
<feature type="chain" id="PRO_0000319701" description="Phosphoribosyl-AMP cyclohydrolase">
    <location>
        <begin position="1"/>
        <end position="123"/>
    </location>
</feature>
<feature type="binding site" evidence="1">
    <location>
        <position position="81"/>
    </location>
    <ligand>
        <name>Mg(2+)</name>
        <dbReference type="ChEBI" id="CHEBI:18420"/>
    </ligand>
</feature>
<feature type="binding site" evidence="1">
    <location>
        <position position="82"/>
    </location>
    <ligand>
        <name>Zn(2+)</name>
        <dbReference type="ChEBI" id="CHEBI:29105"/>
        <note>ligand shared between dimeric partners</note>
    </ligand>
</feature>
<feature type="binding site" evidence="1">
    <location>
        <position position="83"/>
    </location>
    <ligand>
        <name>Mg(2+)</name>
        <dbReference type="ChEBI" id="CHEBI:18420"/>
    </ligand>
</feature>
<feature type="binding site" evidence="1">
    <location>
        <position position="85"/>
    </location>
    <ligand>
        <name>Mg(2+)</name>
        <dbReference type="ChEBI" id="CHEBI:18420"/>
    </ligand>
</feature>
<feature type="binding site" evidence="1">
    <location>
        <position position="98"/>
    </location>
    <ligand>
        <name>Zn(2+)</name>
        <dbReference type="ChEBI" id="CHEBI:29105"/>
        <note>ligand shared between dimeric partners</note>
    </ligand>
</feature>
<feature type="binding site" evidence="1">
    <location>
        <position position="105"/>
    </location>
    <ligand>
        <name>Zn(2+)</name>
        <dbReference type="ChEBI" id="CHEBI:29105"/>
        <note>ligand shared between dimeric partners</note>
    </ligand>
</feature>
<gene>
    <name evidence="1" type="primary">hisI</name>
    <name type="ordered locus">Noca_3032</name>
</gene>
<reference key="1">
    <citation type="submission" date="2006-12" db="EMBL/GenBank/DDBJ databases">
        <title>Complete sequence of chromosome 1 of Nocardioides sp. JS614.</title>
        <authorList>
            <person name="Copeland A."/>
            <person name="Lucas S."/>
            <person name="Lapidus A."/>
            <person name="Barry K."/>
            <person name="Detter J.C."/>
            <person name="Glavina del Rio T."/>
            <person name="Hammon N."/>
            <person name="Israni S."/>
            <person name="Dalin E."/>
            <person name="Tice H."/>
            <person name="Pitluck S."/>
            <person name="Thompson L.S."/>
            <person name="Brettin T."/>
            <person name="Bruce D."/>
            <person name="Han C."/>
            <person name="Tapia R."/>
            <person name="Schmutz J."/>
            <person name="Larimer F."/>
            <person name="Land M."/>
            <person name="Hauser L."/>
            <person name="Kyrpides N."/>
            <person name="Kim E."/>
            <person name="Mattes T."/>
            <person name="Gossett J."/>
            <person name="Richardson P."/>
        </authorList>
    </citation>
    <scope>NUCLEOTIDE SEQUENCE [LARGE SCALE GENOMIC DNA]</scope>
    <source>
        <strain>ATCC BAA-499 / JS614</strain>
    </source>
</reference>
<organism>
    <name type="scientific">Nocardioides sp. (strain ATCC BAA-499 / JS614)</name>
    <dbReference type="NCBI Taxonomy" id="196162"/>
    <lineage>
        <taxon>Bacteria</taxon>
        <taxon>Bacillati</taxon>
        <taxon>Actinomycetota</taxon>
        <taxon>Actinomycetes</taxon>
        <taxon>Propionibacteriales</taxon>
        <taxon>Nocardioidaceae</taxon>
        <taxon>Nocardioides</taxon>
    </lineage>
</organism>
<evidence type="ECO:0000255" key="1">
    <source>
        <dbReference type="HAMAP-Rule" id="MF_01021"/>
    </source>
</evidence>
<proteinExistence type="inferred from homology"/>
<name>HIS3_NOCSJ</name>
<comment type="function">
    <text evidence="1">Catalyzes the hydrolysis of the adenine ring of phosphoribosyl-AMP.</text>
</comment>
<comment type="catalytic activity">
    <reaction evidence="1">
        <text>1-(5-phospho-beta-D-ribosyl)-5'-AMP + H2O = 1-(5-phospho-beta-D-ribosyl)-5-[(5-phospho-beta-D-ribosylamino)methylideneamino]imidazole-4-carboxamide</text>
        <dbReference type="Rhea" id="RHEA:20049"/>
        <dbReference type="ChEBI" id="CHEBI:15377"/>
        <dbReference type="ChEBI" id="CHEBI:58435"/>
        <dbReference type="ChEBI" id="CHEBI:59457"/>
        <dbReference type="EC" id="3.5.4.19"/>
    </reaction>
</comment>
<comment type="cofactor">
    <cofactor evidence="1">
        <name>Mg(2+)</name>
        <dbReference type="ChEBI" id="CHEBI:18420"/>
    </cofactor>
    <text evidence="1">Binds 1 Mg(2+) ion per subunit.</text>
</comment>
<comment type="cofactor">
    <cofactor evidence="1">
        <name>Zn(2+)</name>
        <dbReference type="ChEBI" id="CHEBI:29105"/>
    </cofactor>
    <text evidence="1">Binds 1 zinc ion per subunit.</text>
</comment>
<comment type="pathway">
    <text evidence="1">Amino-acid biosynthesis; L-histidine biosynthesis; L-histidine from 5-phospho-alpha-D-ribose 1-diphosphate: step 3/9.</text>
</comment>
<comment type="subunit">
    <text evidence="1">Homodimer.</text>
</comment>
<comment type="subcellular location">
    <subcellularLocation>
        <location evidence="1">Cytoplasm</location>
    </subcellularLocation>
</comment>
<comment type="similarity">
    <text evidence="1">Belongs to the PRA-CH family.</text>
</comment>
<protein>
    <recommendedName>
        <fullName evidence="1">Phosphoribosyl-AMP cyclohydrolase</fullName>
        <shortName evidence="1">PRA-CH</shortName>
        <ecNumber evidence="1">3.5.4.19</ecNumber>
    </recommendedName>
</protein>
<accession>A1SL49</accession>
<dbReference type="EC" id="3.5.4.19" evidence="1"/>
<dbReference type="EMBL" id="CP000509">
    <property type="protein sequence ID" value="ABL82534.1"/>
    <property type="molecule type" value="Genomic_DNA"/>
</dbReference>
<dbReference type="SMR" id="A1SL49"/>
<dbReference type="STRING" id="196162.Noca_3032"/>
<dbReference type="KEGG" id="nca:Noca_3032"/>
<dbReference type="eggNOG" id="COG0139">
    <property type="taxonomic scope" value="Bacteria"/>
</dbReference>
<dbReference type="HOGENOM" id="CLU_048577_5_1_11"/>
<dbReference type="OrthoDB" id="9795769at2"/>
<dbReference type="UniPathway" id="UPA00031">
    <property type="reaction ID" value="UER00008"/>
</dbReference>
<dbReference type="Proteomes" id="UP000000640">
    <property type="component" value="Chromosome"/>
</dbReference>
<dbReference type="GO" id="GO:0005737">
    <property type="term" value="C:cytoplasm"/>
    <property type="evidence" value="ECO:0007669"/>
    <property type="project" value="UniProtKB-SubCell"/>
</dbReference>
<dbReference type="GO" id="GO:0000287">
    <property type="term" value="F:magnesium ion binding"/>
    <property type="evidence" value="ECO:0007669"/>
    <property type="project" value="UniProtKB-UniRule"/>
</dbReference>
<dbReference type="GO" id="GO:0004635">
    <property type="term" value="F:phosphoribosyl-AMP cyclohydrolase activity"/>
    <property type="evidence" value="ECO:0007669"/>
    <property type="project" value="UniProtKB-UniRule"/>
</dbReference>
<dbReference type="GO" id="GO:0008270">
    <property type="term" value="F:zinc ion binding"/>
    <property type="evidence" value="ECO:0007669"/>
    <property type="project" value="UniProtKB-UniRule"/>
</dbReference>
<dbReference type="GO" id="GO:0000105">
    <property type="term" value="P:L-histidine biosynthetic process"/>
    <property type="evidence" value="ECO:0007669"/>
    <property type="project" value="UniProtKB-UniRule"/>
</dbReference>
<dbReference type="FunFam" id="3.10.20.810:FF:000001">
    <property type="entry name" value="Histidine biosynthesis bifunctional protein HisIE"/>
    <property type="match status" value="1"/>
</dbReference>
<dbReference type="Gene3D" id="3.10.20.810">
    <property type="entry name" value="Phosphoribosyl-AMP cyclohydrolase"/>
    <property type="match status" value="1"/>
</dbReference>
<dbReference type="HAMAP" id="MF_01021">
    <property type="entry name" value="HisI"/>
    <property type="match status" value="1"/>
</dbReference>
<dbReference type="InterPro" id="IPR026660">
    <property type="entry name" value="PRA-CH"/>
</dbReference>
<dbReference type="InterPro" id="IPR002496">
    <property type="entry name" value="PRib_AMP_CycHydrolase_dom"/>
</dbReference>
<dbReference type="InterPro" id="IPR038019">
    <property type="entry name" value="PRib_AMP_CycHydrolase_sf"/>
</dbReference>
<dbReference type="NCBIfam" id="NF000768">
    <property type="entry name" value="PRK00051.1"/>
    <property type="match status" value="1"/>
</dbReference>
<dbReference type="PANTHER" id="PTHR42945">
    <property type="entry name" value="HISTIDINE BIOSYNTHESIS BIFUNCTIONAL PROTEIN"/>
    <property type="match status" value="1"/>
</dbReference>
<dbReference type="PANTHER" id="PTHR42945:SF11">
    <property type="entry name" value="PHOSPHORIBOSYL-AMP CYCLOHYDROLASE"/>
    <property type="match status" value="1"/>
</dbReference>
<dbReference type="Pfam" id="PF01502">
    <property type="entry name" value="PRA-CH"/>
    <property type="match status" value="1"/>
</dbReference>
<dbReference type="SUPFAM" id="SSF141734">
    <property type="entry name" value="HisI-like"/>
    <property type="match status" value="1"/>
</dbReference>
<sequence>MTTLDPAIAGRLKRNPDGLVPAVVQQHDTGEVLMLGWMDDEALARTLTTGRATYWSRSRQEYWLKGETSGHVQWVKEVRLDCDGDTILVKVDQVGAACHTGDRTCFDADLLSGADRPGPDARG</sequence>